<gene>
    <name evidence="1" type="primary">speB</name>
    <name type="ordered locus">KPN78578_33090</name>
    <name type="ORF">KPN_03373</name>
</gene>
<proteinExistence type="inferred from homology"/>
<accession>A6TDU9</accession>
<evidence type="ECO:0000255" key="1">
    <source>
        <dbReference type="HAMAP-Rule" id="MF_01418"/>
    </source>
</evidence>
<feature type="chain" id="PRO_1000024282" description="Agmatinase">
    <location>
        <begin position="1"/>
        <end position="306"/>
    </location>
</feature>
<feature type="binding site" evidence="1">
    <location>
        <position position="126"/>
    </location>
    <ligand>
        <name>Mn(2+)</name>
        <dbReference type="ChEBI" id="CHEBI:29035"/>
    </ligand>
</feature>
<feature type="binding site" evidence="1">
    <location>
        <position position="149"/>
    </location>
    <ligand>
        <name>Mn(2+)</name>
        <dbReference type="ChEBI" id="CHEBI:29035"/>
    </ligand>
</feature>
<feature type="binding site" evidence="1">
    <location>
        <position position="151"/>
    </location>
    <ligand>
        <name>Mn(2+)</name>
        <dbReference type="ChEBI" id="CHEBI:29035"/>
    </ligand>
</feature>
<feature type="binding site" evidence="1">
    <location>
        <position position="153"/>
    </location>
    <ligand>
        <name>Mn(2+)</name>
        <dbReference type="ChEBI" id="CHEBI:29035"/>
    </ligand>
</feature>
<feature type="binding site" evidence="1">
    <location>
        <position position="230"/>
    </location>
    <ligand>
        <name>Mn(2+)</name>
        <dbReference type="ChEBI" id="CHEBI:29035"/>
    </ligand>
</feature>
<feature type="binding site" evidence="1">
    <location>
        <position position="232"/>
    </location>
    <ligand>
        <name>Mn(2+)</name>
        <dbReference type="ChEBI" id="CHEBI:29035"/>
    </ligand>
</feature>
<keyword id="KW-0378">Hydrolase</keyword>
<keyword id="KW-0464">Manganese</keyword>
<keyword id="KW-0479">Metal-binding</keyword>
<keyword id="KW-0620">Polyamine biosynthesis</keyword>
<keyword id="KW-0661">Putrescine biosynthesis</keyword>
<keyword id="KW-0745">Spermidine biosynthesis</keyword>
<protein>
    <recommendedName>
        <fullName evidence="1">Agmatinase</fullName>
        <ecNumber evidence="1">3.5.3.11</ecNumber>
    </recommendedName>
    <alternativeName>
        <fullName evidence="1">Agmatine ureohydrolase</fullName>
        <shortName evidence="1">AUH</shortName>
    </alternativeName>
</protein>
<reference key="1">
    <citation type="submission" date="2006-09" db="EMBL/GenBank/DDBJ databases">
        <authorList>
            <consortium name="The Klebsiella pneumonia Genome Sequencing Project"/>
            <person name="McClelland M."/>
            <person name="Sanderson E.K."/>
            <person name="Spieth J."/>
            <person name="Clifton W.S."/>
            <person name="Latreille P."/>
            <person name="Sabo A."/>
            <person name="Pepin K."/>
            <person name="Bhonagiri V."/>
            <person name="Porwollik S."/>
            <person name="Ali J."/>
            <person name="Wilson R.K."/>
        </authorList>
    </citation>
    <scope>NUCLEOTIDE SEQUENCE [LARGE SCALE GENOMIC DNA]</scope>
    <source>
        <strain>ATCC 700721 / MGH 78578</strain>
    </source>
</reference>
<organism>
    <name type="scientific">Klebsiella pneumoniae subsp. pneumoniae (strain ATCC 700721 / MGH 78578)</name>
    <dbReference type="NCBI Taxonomy" id="272620"/>
    <lineage>
        <taxon>Bacteria</taxon>
        <taxon>Pseudomonadati</taxon>
        <taxon>Pseudomonadota</taxon>
        <taxon>Gammaproteobacteria</taxon>
        <taxon>Enterobacterales</taxon>
        <taxon>Enterobacteriaceae</taxon>
        <taxon>Klebsiella/Raoultella group</taxon>
        <taxon>Klebsiella</taxon>
        <taxon>Klebsiella pneumoniae complex</taxon>
    </lineage>
</organism>
<name>SPEB_KLEP7</name>
<comment type="function">
    <text evidence="1">Catalyzes the formation of putrescine from agmatine.</text>
</comment>
<comment type="catalytic activity">
    <reaction evidence="1">
        <text>agmatine + H2O = urea + putrescine</text>
        <dbReference type="Rhea" id="RHEA:13929"/>
        <dbReference type="ChEBI" id="CHEBI:15377"/>
        <dbReference type="ChEBI" id="CHEBI:16199"/>
        <dbReference type="ChEBI" id="CHEBI:58145"/>
        <dbReference type="ChEBI" id="CHEBI:326268"/>
        <dbReference type="EC" id="3.5.3.11"/>
    </reaction>
</comment>
<comment type="cofactor">
    <cofactor evidence="1">
        <name>Mn(2+)</name>
        <dbReference type="ChEBI" id="CHEBI:29035"/>
    </cofactor>
</comment>
<comment type="pathway">
    <text evidence="1">Amine and polyamine biosynthesis; putrescine biosynthesis via agmatine pathway; putrescine from agmatine: step 1/1.</text>
</comment>
<comment type="similarity">
    <text evidence="1">Belongs to the arginase family. Agmatinase subfamily.</text>
</comment>
<dbReference type="EC" id="3.5.3.11" evidence="1"/>
<dbReference type="EMBL" id="CP000647">
    <property type="protein sequence ID" value="ABR78770.1"/>
    <property type="molecule type" value="Genomic_DNA"/>
</dbReference>
<dbReference type="RefSeq" id="WP_002916572.1">
    <property type="nucleotide sequence ID" value="NC_009648.1"/>
</dbReference>
<dbReference type="SMR" id="A6TDU9"/>
<dbReference type="STRING" id="272620.KPN_03373"/>
<dbReference type="jPOST" id="A6TDU9"/>
<dbReference type="PaxDb" id="272620-KPN_03373"/>
<dbReference type="EnsemblBacteria" id="ABR78770">
    <property type="protein sequence ID" value="ABR78770"/>
    <property type="gene ID" value="KPN_03373"/>
</dbReference>
<dbReference type="GeneID" id="93271347"/>
<dbReference type="KEGG" id="kpn:KPN_03373"/>
<dbReference type="HOGENOM" id="CLU_039478_0_0_6"/>
<dbReference type="UniPathway" id="UPA00534">
    <property type="reaction ID" value="UER00287"/>
</dbReference>
<dbReference type="Proteomes" id="UP000000265">
    <property type="component" value="Chromosome"/>
</dbReference>
<dbReference type="GO" id="GO:0008783">
    <property type="term" value="F:agmatinase activity"/>
    <property type="evidence" value="ECO:0007669"/>
    <property type="project" value="UniProtKB-UniRule"/>
</dbReference>
<dbReference type="GO" id="GO:0030145">
    <property type="term" value="F:manganese ion binding"/>
    <property type="evidence" value="ECO:0007669"/>
    <property type="project" value="InterPro"/>
</dbReference>
<dbReference type="GO" id="GO:0033389">
    <property type="term" value="P:putrescine biosynthetic process from arginine, via agmatine"/>
    <property type="evidence" value="ECO:0007669"/>
    <property type="project" value="TreeGrafter"/>
</dbReference>
<dbReference type="GO" id="GO:0008295">
    <property type="term" value="P:spermidine biosynthetic process"/>
    <property type="evidence" value="ECO:0007669"/>
    <property type="project" value="UniProtKB-UniRule"/>
</dbReference>
<dbReference type="CDD" id="cd11592">
    <property type="entry name" value="Agmatinase_PAH"/>
    <property type="match status" value="1"/>
</dbReference>
<dbReference type="FunFam" id="3.40.800.10:FF:000001">
    <property type="entry name" value="Agmatinase"/>
    <property type="match status" value="1"/>
</dbReference>
<dbReference type="Gene3D" id="3.40.800.10">
    <property type="entry name" value="Ureohydrolase domain"/>
    <property type="match status" value="1"/>
</dbReference>
<dbReference type="HAMAP" id="MF_01418">
    <property type="entry name" value="SpeB"/>
    <property type="match status" value="1"/>
</dbReference>
<dbReference type="InterPro" id="IPR023694">
    <property type="entry name" value="Agmatinase"/>
</dbReference>
<dbReference type="InterPro" id="IPR005925">
    <property type="entry name" value="Agmatinase-rel"/>
</dbReference>
<dbReference type="InterPro" id="IPR006035">
    <property type="entry name" value="Ureohydrolase"/>
</dbReference>
<dbReference type="InterPro" id="IPR023696">
    <property type="entry name" value="Ureohydrolase_dom_sf"/>
</dbReference>
<dbReference type="InterPro" id="IPR020855">
    <property type="entry name" value="Ureohydrolase_Mn_BS"/>
</dbReference>
<dbReference type="NCBIfam" id="TIGR01230">
    <property type="entry name" value="agmatinase"/>
    <property type="match status" value="1"/>
</dbReference>
<dbReference type="NCBIfam" id="NF002564">
    <property type="entry name" value="PRK02190.1"/>
    <property type="match status" value="1"/>
</dbReference>
<dbReference type="PANTHER" id="PTHR11358">
    <property type="entry name" value="ARGINASE/AGMATINASE"/>
    <property type="match status" value="1"/>
</dbReference>
<dbReference type="PANTHER" id="PTHR11358:SF26">
    <property type="entry name" value="GUANIDINO ACID HYDROLASE, MITOCHONDRIAL"/>
    <property type="match status" value="1"/>
</dbReference>
<dbReference type="Pfam" id="PF00491">
    <property type="entry name" value="Arginase"/>
    <property type="match status" value="1"/>
</dbReference>
<dbReference type="PIRSF" id="PIRSF036979">
    <property type="entry name" value="Arginase"/>
    <property type="match status" value="1"/>
</dbReference>
<dbReference type="SUPFAM" id="SSF52768">
    <property type="entry name" value="Arginase/deacetylase"/>
    <property type="match status" value="1"/>
</dbReference>
<dbReference type="PROSITE" id="PS01053">
    <property type="entry name" value="ARGINASE_1"/>
    <property type="match status" value="1"/>
</dbReference>
<dbReference type="PROSITE" id="PS51409">
    <property type="entry name" value="ARGINASE_2"/>
    <property type="match status" value="1"/>
</dbReference>
<sequence>MSTLGHQYDNSLVSNAFGFLRLPMNFMPYESDADWVITGVPFDMATSGRAGGRHGPAAIRQVSTNLAWEHNRFPWNFDMRERLNVVDCGDLVYAFGDAREMSEKLQAHAEKLLAAGKRMLSFGGDHFVTLPLLRAHAKHFGKMALVHFDAHTDTYANGCEFDHGTMFYTAPNEGLIDPNHSVQIGIRTEFDKDNGFTVLDAGQVNDRSVDDVIAQVKQIVGDMPVYLTFDIDCLDPAFAPGTGTPVIGGLTSDRAIKLVRGLKDLNIVGMDVVEVAPAYDQSEITALAAATLALEMLYIQAAKKGE</sequence>